<proteinExistence type="inferred from homology"/>
<evidence type="ECO:0000250" key="1"/>
<evidence type="ECO:0000255" key="2"/>
<evidence type="ECO:0000305" key="3"/>
<feature type="chain" id="PRO_0000166147" description="D-amino acid dehydrogenase 3">
    <location>
        <begin position="1"/>
        <end position="412"/>
    </location>
</feature>
<feature type="binding site" evidence="2">
    <location>
        <begin position="4"/>
        <end position="18"/>
    </location>
    <ligand>
        <name>FAD</name>
        <dbReference type="ChEBI" id="CHEBI:57692"/>
    </ligand>
</feature>
<sequence>MPKIVVIGAGIAGVSTAYALLEQGYDVTVVERRRYAAMETSFANGGQLSASNAEVWNHWSTVLKGIKWMLRRDAPLLMNPTPSWHKYSWLLEFVSNISRYRENTIETTRLAIAARKHLFEIADREGIDFDHVRRGILHVYWDKDGFDHALKVNEMLNEGGLDRRSVTPSEFAGIEPALHGKFYGGFYTPSDSTGDIHKYCAGLEKACTKRGAQFIYDAAVTRIERRDRFNIVCATDGADQTLVADGIVVCAGTNSRDIAAMFGDRINIYPVKGYSITVELDGAAADSSAPWVSILDDRAKIVTSRLGAARLRVAGTAEFNGVNFDIREDRIRPLVDWTRMMFPKVATEHVVPWAGLRPMMPNMMPRVGKSRVPGVFYNTGHGHLGWTLSAATSAMLATVVATDLPIDARLAA</sequence>
<dbReference type="EC" id="1.4.99.-"/>
<dbReference type="EMBL" id="BA000013">
    <property type="protein sequence ID" value="BAB54587.1"/>
    <property type="molecule type" value="Genomic_DNA"/>
</dbReference>
<dbReference type="RefSeq" id="WP_010915866.1">
    <property type="nucleotide sequence ID" value="NC_002679.1"/>
</dbReference>
<dbReference type="SMR" id="Q981X2"/>
<dbReference type="KEGG" id="mlo:mlr9201"/>
<dbReference type="PATRIC" id="fig|266835.9.peg.7006"/>
<dbReference type="HOGENOM" id="CLU_007884_9_2_5"/>
<dbReference type="Proteomes" id="UP000000552">
    <property type="component" value="Plasmid pMLa"/>
</dbReference>
<dbReference type="GO" id="GO:0005737">
    <property type="term" value="C:cytoplasm"/>
    <property type="evidence" value="ECO:0007669"/>
    <property type="project" value="TreeGrafter"/>
</dbReference>
<dbReference type="GO" id="GO:0005886">
    <property type="term" value="C:plasma membrane"/>
    <property type="evidence" value="ECO:0007669"/>
    <property type="project" value="TreeGrafter"/>
</dbReference>
<dbReference type="GO" id="GO:0008718">
    <property type="term" value="F:D-amino-acid dehydrogenase activity"/>
    <property type="evidence" value="ECO:0007669"/>
    <property type="project" value="UniProtKB-UniRule"/>
</dbReference>
<dbReference type="GO" id="GO:0055130">
    <property type="term" value="P:D-alanine catabolic process"/>
    <property type="evidence" value="ECO:0007669"/>
    <property type="project" value="TreeGrafter"/>
</dbReference>
<dbReference type="Gene3D" id="3.30.9.10">
    <property type="entry name" value="D-Amino Acid Oxidase, subunit A, domain 2"/>
    <property type="match status" value="1"/>
</dbReference>
<dbReference type="Gene3D" id="3.50.50.60">
    <property type="entry name" value="FAD/NAD(P)-binding domain"/>
    <property type="match status" value="2"/>
</dbReference>
<dbReference type="HAMAP" id="MF_01202">
    <property type="entry name" value="DadA"/>
    <property type="match status" value="1"/>
</dbReference>
<dbReference type="InterPro" id="IPR023080">
    <property type="entry name" value="DadA"/>
</dbReference>
<dbReference type="InterPro" id="IPR006076">
    <property type="entry name" value="FAD-dep_OxRdtase"/>
</dbReference>
<dbReference type="InterPro" id="IPR036188">
    <property type="entry name" value="FAD/NAD-bd_sf"/>
</dbReference>
<dbReference type="NCBIfam" id="NF009074">
    <property type="entry name" value="PRK12409.1"/>
    <property type="match status" value="1"/>
</dbReference>
<dbReference type="PANTHER" id="PTHR13847:SF280">
    <property type="entry name" value="D-AMINO ACID DEHYDROGENASE"/>
    <property type="match status" value="1"/>
</dbReference>
<dbReference type="PANTHER" id="PTHR13847">
    <property type="entry name" value="SARCOSINE DEHYDROGENASE-RELATED"/>
    <property type="match status" value="1"/>
</dbReference>
<dbReference type="Pfam" id="PF01266">
    <property type="entry name" value="DAO"/>
    <property type="match status" value="1"/>
</dbReference>
<dbReference type="SUPFAM" id="SSF54373">
    <property type="entry name" value="FAD-linked reductases, C-terminal domain"/>
    <property type="match status" value="1"/>
</dbReference>
<dbReference type="SUPFAM" id="SSF51905">
    <property type="entry name" value="FAD/NAD(P)-binding domain"/>
    <property type="match status" value="1"/>
</dbReference>
<keyword id="KW-0274">FAD</keyword>
<keyword id="KW-0285">Flavoprotein</keyword>
<keyword id="KW-0560">Oxidoreductase</keyword>
<keyword id="KW-0614">Plasmid</keyword>
<geneLocation type="plasmid">
    <name>pMLa</name>
</geneLocation>
<reference key="1">
    <citation type="journal article" date="2000" name="DNA Res.">
        <title>Complete genome structure of the nitrogen-fixing symbiotic bacterium Mesorhizobium loti.</title>
        <authorList>
            <person name="Kaneko T."/>
            <person name="Nakamura Y."/>
            <person name="Sato S."/>
            <person name="Asamizu E."/>
            <person name="Kato T."/>
            <person name="Sasamoto S."/>
            <person name="Watanabe A."/>
            <person name="Idesawa K."/>
            <person name="Ishikawa A."/>
            <person name="Kawashima K."/>
            <person name="Kimura T."/>
            <person name="Kishida Y."/>
            <person name="Kiyokawa C."/>
            <person name="Kohara M."/>
            <person name="Matsumoto M."/>
            <person name="Matsuno A."/>
            <person name="Mochizuki Y."/>
            <person name="Nakayama S."/>
            <person name="Nakazaki N."/>
            <person name="Shimpo S."/>
            <person name="Sugimoto M."/>
            <person name="Takeuchi C."/>
            <person name="Yamada M."/>
            <person name="Tabata S."/>
        </authorList>
    </citation>
    <scope>NUCLEOTIDE SEQUENCE [LARGE SCALE GENOMIC DNA]</scope>
    <source>
        <strain>LMG 29417 / CECT 9101 / MAFF 303099</strain>
    </source>
</reference>
<comment type="function">
    <text evidence="1">Oxidative deamination of D-amino acids.</text>
</comment>
<comment type="catalytic activity">
    <reaction>
        <text>a D-alpha-amino acid + A + H2O = a 2-oxocarboxylate + AH2 + NH4(+)</text>
        <dbReference type="Rhea" id="RHEA:18125"/>
        <dbReference type="ChEBI" id="CHEBI:13193"/>
        <dbReference type="ChEBI" id="CHEBI:15377"/>
        <dbReference type="ChEBI" id="CHEBI:17499"/>
        <dbReference type="ChEBI" id="CHEBI:28938"/>
        <dbReference type="ChEBI" id="CHEBI:35179"/>
        <dbReference type="ChEBI" id="CHEBI:59871"/>
    </reaction>
</comment>
<comment type="cofactor">
    <cofactor evidence="1">
        <name>FAD</name>
        <dbReference type="ChEBI" id="CHEBI:57692"/>
    </cofactor>
</comment>
<comment type="similarity">
    <text evidence="3">Belongs to the DadA oxidoreductase family.</text>
</comment>
<name>DADA3_RHILO</name>
<organism>
    <name type="scientific">Mesorhizobium japonicum (strain LMG 29417 / CECT 9101 / MAFF 303099)</name>
    <name type="common">Mesorhizobium loti (strain MAFF 303099)</name>
    <dbReference type="NCBI Taxonomy" id="266835"/>
    <lineage>
        <taxon>Bacteria</taxon>
        <taxon>Pseudomonadati</taxon>
        <taxon>Pseudomonadota</taxon>
        <taxon>Alphaproteobacteria</taxon>
        <taxon>Hyphomicrobiales</taxon>
        <taxon>Phyllobacteriaceae</taxon>
        <taxon>Mesorhizobium</taxon>
    </lineage>
</organism>
<gene>
    <name type="primary">dadA3</name>
    <name type="ordered locus">mlr9201</name>
</gene>
<accession>Q981X2</accession>
<protein>
    <recommendedName>
        <fullName>D-amino acid dehydrogenase 3</fullName>
        <ecNumber>1.4.99.-</ecNumber>
    </recommendedName>
</protein>